<comment type="function">
    <text evidence="1">One of the primary rRNA binding proteins, it binds directly to 16S rRNA where it nucleates assembly of the body of the 30S subunit.</text>
</comment>
<comment type="function">
    <text evidence="1">With S5 and S12 plays an important role in translational accuracy.</text>
</comment>
<comment type="subunit">
    <text evidence="1">Part of the 30S ribosomal subunit. Contacts protein S5. The interaction surface between S4 and S5 is involved in control of translational fidelity (By similarity).</text>
</comment>
<comment type="subcellular location">
    <subcellularLocation>
        <location>Plastid</location>
        <location>Chloroplast</location>
    </subcellularLocation>
</comment>
<comment type="similarity">
    <text evidence="3">Belongs to the universal ribosomal protein uS4 family.</text>
</comment>
<protein>
    <recommendedName>
        <fullName evidence="3">Small ribosomal subunit protein uS4c</fullName>
    </recommendedName>
    <alternativeName>
        <fullName>30S ribosomal protein S4, chloroplastic</fullName>
    </alternativeName>
</protein>
<keyword id="KW-0150">Chloroplast</keyword>
<keyword id="KW-0934">Plastid</keyword>
<keyword id="KW-0687">Ribonucleoprotein</keyword>
<keyword id="KW-0689">Ribosomal protein</keyword>
<keyword id="KW-0694">RNA-binding</keyword>
<keyword id="KW-0699">rRNA-binding</keyword>
<feature type="chain" id="PRO_0000132555" description="Small ribosomal subunit protein uS4c">
    <location>
        <begin position="1"/>
        <end position="207"/>
    </location>
</feature>
<feature type="domain" description="S4 RNA-binding">
    <location>
        <begin position="97"/>
        <end position="158"/>
    </location>
</feature>
<feature type="region of interest" description="Disordered" evidence="2">
    <location>
        <begin position="22"/>
        <end position="51"/>
    </location>
</feature>
<name>RR4_CHLVU</name>
<dbReference type="EMBL" id="D10997">
    <property type="protein sequence ID" value="BAA01767.1"/>
    <property type="molecule type" value="Genomic_DNA"/>
</dbReference>
<dbReference type="EMBL" id="AB001684">
    <property type="protein sequence ID" value="BAA57980.1"/>
    <property type="molecule type" value="Genomic_DNA"/>
</dbReference>
<dbReference type="PIR" id="T07332">
    <property type="entry name" value="T07332"/>
</dbReference>
<dbReference type="RefSeq" id="NP_045904.1">
    <property type="nucleotide sequence ID" value="NC_001865.1"/>
</dbReference>
<dbReference type="SMR" id="P32975"/>
<dbReference type="GeneID" id="809117"/>
<dbReference type="GO" id="GO:0009507">
    <property type="term" value="C:chloroplast"/>
    <property type="evidence" value="ECO:0007669"/>
    <property type="project" value="UniProtKB-SubCell"/>
</dbReference>
<dbReference type="GO" id="GO:0015935">
    <property type="term" value="C:small ribosomal subunit"/>
    <property type="evidence" value="ECO:0007669"/>
    <property type="project" value="InterPro"/>
</dbReference>
<dbReference type="GO" id="GO:0019843">
    <property type="term" value="F:rRNA binding"/>
    <property type="evidence" value="ECO:0007669"/>
    <property type="project" value="UniProtKB-UniRule"/>
</dbReference>
<dbReference type="GO" id="GO:0003735">
    <property type="term" value="F:structural constituent of ribosome"/>
    <property type="evidence" value="ECO:0007669"/>
    <property type="project" value="InterPro"/>
</dbReference>
<dbReference type="GO" id="GO:0042274">
    <property type="term" value="P:ribosomal small subunit biogenesis"/>
    <property type="evidence" value="ECO:0007669"/>
    <property type="project" value="TreeGrafter"/>
</dbReference>
<dbReference type="GO" id="GO:0006412">
    <property type="term" value="P:translation"/>
    <property type="evidence" value="ECO:0007669"/>
    <property type="project" value="UniProtKB-UniRule"/>
</dbReference>
<dbReference type="CDD" id="cd00165">
    <property type="entry name" value="S4"/>
    <property type="match status" value="1"/>
</dbReference>
<dbReference type="FunFam" id="3.10.290.10:FF:000001">
    <property type="entry name" value="30S ribosomal protein S4"/>
    <property type="match status" value="1"/>
</dbReference>
<dbReference type="FunFam" id="1.10.1050.10:FF:000002">
    <property type="entry name" value="30S ribosomal protein S4, chloroplastic"/>
    <property type="match status" value="1"/>
</dbReference>
<dbReference type="Gene3D" id="1.10.1050.10">
    <property type="entry name" value="Ribosomal Protein S4 Delta 41, Chain A, domain 1"/>
    <property type="match status" value="1"/>
</dbReference>
<dbReference type="Gene3D" id="3.10.290.10">
    <property type="entry name" value="RNA-binding S4 domain"/>
    <property type="match status" value="1"/>
</dbReference>
<dbReference type="HAMAP" id="MF_01306_B">
    <property type="entry name" value="Ribosomal_uS4_B"/>
    <property type="match status" value="1"/>
</dbReference>
<dbReference type="InterPro" id="IPR022801">
    <property type="entry name" value="Ribosomal_uS4"/>
</dbReference>
<dbReference type="InterPro" id="IPR005709">
    <property type="entry name" value="Ribosomal_uS4_bac-type"/>
</dbReference>
<dbReference type="InterPro" id="IPR018079">
    <property type="entry name" value="Ribosomal_uS4_CS"/>
</dbReference>
<dbReference type="InterPro" id="IPR001912">
    <property type="entry name" value="Ribosomal_uS4_N"/>
</dbReference>
<dbReference type="InterPro" id="IPR002942">
    <property type="entry name" value="S4_RNA-bd"/>
</dbReference>
<dbReference type="InterPro" id="IPR036986">
    <property type="entry name" value="S4_RNA-bd_sf"/>
</dbReference>
<dbReference type="NCBIfam" id="NF003717">
    <property type="entry name" value="PRK05327.1"/>
    <property type="match status" value="1"/>
</dbReference>
<dbReference type="NCBIfam" id="TIGR01017">
    <property type="entry name" value="rpsD_bact"/>
    <property type="match status" value="1"/>
</dbReference>
<dbReference type="PANTHER" id="PTHR11831">
    <property type="entry name" value="30S 40S RIBOSOMAL PROTEIN"/>
    <property type="match status" value="1"/>
</dbReference>
<dbReference type="PANTHER" id="PTHR11831:SF4">
    <property type="entry name" value="SMALL RIBOSOMAL SUBUNIT PROTEIN US4M"/>
    <property type="match status" value="1"/>
</dbReference>
<dbReference type="Pfam" id="PF00163">
    <property type="entry name" value="Ribosomal_S4"/>
    <property type="match status" value="1"/>
</dbReference>
<dbReference type="Pfam" id="PF01479">
    <property type="entry name" value="S4"/>
    <property type="match status" value="1"/>
</dbReference>
<dbReference type="SMART" id="SM01390">
    <property type="entry name" value="Ribosomal_S4"/>
    <property type="match status" value="1"/>
</dbReference>
<dbReference type="SMART" id="SM00363">
    <property type="entry name" value="S4"/>
    <property type="match status" value="1"/>
</dbReference>
<dbReference type="SUPFAM" id="SSF55174">
    <property type="entry name" value="Alpha-L RNA-binding motif"/>
    <property type="match status" value="1"/>
</dbReference>
<dbReference type="PROSITE" id="PS00632">
    <property type="entry name" value="RIBOSOMAL_S4"/>
    <property type="match status" value="1"/>
</dbReference>
<dbReference type="PROSITE" id="PS50889">
    <property type="entry name" value="S4"/>
    <property type="match status" value="1"/>
</dbReference>
<gene>
    <name type="primary">rps4</name>
</gene>
<reference key="1">
    <citation type="journal article" date="1992" name="Life Sci. Adv. (Genet.)">
        <title>Gene organization in Chlorella chloroplast genome is peculiar but suggests common lineage with land plants.</title>
        <authorList>
            <person name="Yoshinaga K."/>
            <person name="Iwasaki H."/>
            <person name="Sasaki T."/>
        </authorList>
    </citation>
    <scope>NUCLEOTIDE SEQUENCE [GENOMIC DNA]</scope>
    <source>
        <strain>IAM C-27 / Tamiya</strain>
    </source>
</reference>
<reference key="2">
    <citation type="journal article" date="1997" name="Proc. Natl. Acad. Sci. U.S.A.">
        <title>Complete nucleotide sequence of the chloroplast genome from the green alga Chlorella vulgaris: the existence of genes possibly involved in chloroplast division.</title>
        <authorList>
            <person name="Wakasugi T."/>
            <person name="Nagai T."/>
            <person name="Kapoor M."/>
            <person name="Sugita M."/>
            <person name="Ito M."/>
            <person name="Ito S."/>
            <person name="Tsudzuki J."/>
            <person name="Nakashima K."/>
            <person name="Tsudzuki T."/>
            <person name="Suzuki Y."/>
            <person name="Hamada A."/>
            <person name="Ohta T."/>
            <person name="Inamura A."/>
            <person name="Yoshinaga K."/>
            <person name="Sugiura M."/>
        </authorList>
    </citation>
    <scope>NUCLEOTIDE SEQUENCE [LARGE SCALE GENOMIC DNA]</scope>
    <source>
        <strain>IAM C-27 / Tamiya</strain>
    </source>
</reference>
<organism>
    <name type="scientific">Chlorella vulgaris</name>
    <name type="common">Green alga</name>
    <dbReference type="NCBI Taxonomy" id="3077"/>
    <lineage>
        <taxon>Eukaryota</taxon>
        <taxon>Viridiplantae</taxon>
        <taxon>Chlorophyta</taxon>
        <taxon>core chlorophytes</taxon>
        <taxon>Trebouxiophyceae</taxon>
        <taxon>Chlorellales</taxon>
        <taxon>Chlorellaceae</taxon>
        <taxon>Chlorella clade</taxon>
        <taxon>Chlorella</taxon>
    </lineage>
</organism>
<geneLocation type="chloroplast"/>
<accession>P32975</accession>
<evidence type="ECO:0000250" key="1"/>
<evidence type="ECO:0000256" key="2">
    <source>
        <dbReference type="SAM" id="MobiDB-lite"/>
    </source>
</evidence>
<evidence type="ECO:0000305" key="3"/>
<sequence>MARYRGPKLRIVRRLGELPGLTQKNCTRDFPPGQHGPKKKGGGNQKTKESQYAVRLKEKQKLRFNYGISERQLMSYVREARKRKGSTGEILLQILEMRLDTIIFRLGFAPTIAAARQLINHGHIVVNGRRVDIPSSLCKVNDSISVALNSQNFVKNLLQSFTKTLDAPYLEVNQEKLSAVVRDNIPREAVSLQINELLVVEFYSRKV</sequence>
<proteinExistence type="inferred from homology"/>